<evidence type="ECO:0000250" key="1">
    <source>
        <dbReference type="UniProtKB" id="O64879"/>
    </source>
</evidence>
<evidence type="ECO:0000250" key="2">
    <source>
        <dbReference type="UniProtKB" id="Q7XSK0"/>
    </source>
</evidence>
<evidence type="ECO:0000255" key="3"/>
<evidence type="ECO:0000255" key="4">
    <source>
        <dbReference type="PROSITE-ProRule" id="PRU00498"/>
    </source>
</evidence>
<evidence type="ECO:0000303" key="5">
    <source>
    </source>
</evidence>
<evidence type="ECO:0000305" key="6"/>
<evidence type="ECO:0000312" key="7">
    <source>
        <dbReference type="Araport" id="AT1G60270"/>
    </source>
</evidence>
<evidence type="ECO:0000312" key="8">
    <source>
        <dbReference type="EMBL" id="AAC24060.1"/>
    </source>
</evidence>
<accession>Q682B4</accession>
<accession>O80750</accession>
<comment type="catalytic activity">
    <reaction evidence="1">
        <text>Hydrolysis of terminal, non-reducing beta-D-glucosyl residues with release of beta-D-glucose.</text>
        <dbReference type="EC" id="3.2.1.21"/>
    </reaction>
</comment>
<comment type="similarity">
    <text evidence="6">Belongs to the glycosyl hydrolase 1 family.</text>
</comment>
<comment type="caution">
    <text evidence="6">Could be the product of a pseudogene.</text>
</comment>
<comment type="sequence caution" evidence="6">
    <conflict type="erroneous gene model prediction">
        <sequence resource="EMBL-CDS" id="AAC24060"/>
    </conflict>
</comment>
<proteinExistence type="uncertain"/>
<reference key="1">
    <citation type="journal article" date="2000" name="Nature">
        <title>Sequence and analysis of chromosome 1 of the plant Arabidopsis thaliana.</title>
        <authorList>
            <person name="Theologis A."/>
            <person name="Ecker J.R."/>
            <person name="Palm C.J."/>
            <person name="Federspiel N.A."/>
            <person name="Kaul S."/>
            <person name="White O."/>
            <person name="Alonso J."/>
            <person name="Altafi H."/>
            <person name="Araujo R."/>
            <person name="Bowman C.L."/>
            <person name="Brooks S.Y."/>
            <person name="Buehler E."/>
            <person name="Chan A."/>
            <person name="Chao Q."/>
            <person name="Chen H."/>
            <person name="Cheuk R.F."/>
            <person name="Chin C.W."/>
            <person name="Chung M.K."/>
            <person name="Conn L."/>
            <person name="Conway A.B."/>
            <person name="Conway A.R."/>
            <person name="Creasy T.H."/>
            <person name="Dewar K."/>
            <person name="Dunn P."/>
            <person name="Etgu P."/>
            <person name="Feldblyum T.V."/>
            <person name="Feng J.-D."/>
            <person name="Fong B."/>
            <person name="Fujii C.Y."/>
            <person name="Gill J.E."/>
            <person name="Goldsmith A.D."/>
            <person name="Haas B."/>
            <person name="Hansen N.F."/>
            <person name="Hughes B."/>
            <person name="Huizar L."/>
            <person name="Hunter J.L."/>
            <person name="Jenkins J."/>
            <person name="Johnson-Hopson C."/>
            <person name="Khan S."/>
            <person name="Khaykin E."/>
            <person name="Kim C.J."/>
            <person name="Koo H.L."/>
            <person name="Kremenetskaia I."/>
            <person name="Kurtz D.B."/>
            <person name="Kwan A."/>
            <person name="Lam B."/>
            <person name="Langin-Hooper S."/>
            <person name="Lee A."/>
            <person name="Lee J.M."/>
            <person name="Lenz C.A."/>
            <person name="Li J.H."/>
            <person name="Li Y.-P."/>
            <person name="Lin X."/>
            <person name="Liu S.X."/>
            <person name="Liu Z.A."/>
            <person name="Luros J.S."/>
            <person name="Maiti R."/>
            <person name="Marziali A."/>
            <person name="Militscher J."/>
            <person name="Miranda M."/>
            <person name="Nguyen M."/>
            <person name="Nierman W.C."/>
            <person name="Osborne B.I."/>
            <person name="Pai G."/>
            <person name="Peterson J."/>
            <person name="Pham P.K."/>
            <person name="Rizzo M."/>
            <person name="Rooney T."/>
            <person name="Rowley D."/>
            <person name="Sakano H."/>
            <person name="Salzberg S.L."/>
            <person name="Schwartz J.R."/>
            <person name="Shinn P."/>
            <person name="Southwick A.M."/>
            <person name="Sun H."/>
            <person name="Tallon L.J."/>
            <person name="Tambunga G."/>
            <person name="Toriumi M.J."/>
            <person name="Town C.D."/>
            <person name="Utterback T."/>
            <person name="Van Aken S."/>
            <person name="Vaysberg M."/>
            <person name="Vysotskaia V.S."/>
            <person name="Walker M."/>
            <person name="Wu D."/>
            <person name="Yu G."/>
            <person name="Fraser C.M."/>
            <person name="Venter J.C."/>
            <person name="Davis R.W."/>
        </authorList>
    </citation>
    <scope>NUCLEOTIDE SEQUENCE [LARGE SCALE GENOMIC DNA]</scope>
    <source>
        <strain>cv. Columbia</strain>
    </source>
</reference>
<reference key="2">
    <citation type="journal article" date="2017" name="Plant J.">
        <title>Araport11: a complete reannotation of the Arabidopsis thaliana reference genome.</title>
        <authorList>
            <person name="Cheng C.Y."/>
            <person name="Krishnakumar V."/>
            <person name="Chan A.P."/>
            <person name="Thibaud-Nissen F."/>
            <person name="Schobel S."/>
            <person name="Town C.D."/>
        </authorList>
    </citation>
    <scope>GENOME REANNOTATION</scope>
    <source>
        <strain>cv. Columbia</strain>
    </source>
</reference>
<reference key="3">
    <citation type="submission" date="2004-09" db="EMBL/GenBank/DDBJ databases">
        <title>Large-scale analysis of RIKEN Arabidopsis full-length (RAFL) cDNAs.</title>
        <authorList>
            <person name="Totoki Y."/>
            <person name="Seki M."/>
            <person name="Ishida J."/>
            <person name="Nakajima M."/>
            <person name="Enju A."/>
            <person name="Kamiya A."/>
            <person name="Narusaka M."/>
            <person name="Shin-i T."/>
            <person name="Nakagawa M."/>
            <person name="Sakamoto N."/>
            <person name="Oishi K."/>
            <person name="Kohara Y."/>
            <person name="Kobayashi M."/>
            <person name="Toyoda A."/>
            <person name="Sakaki Y."/>
            <person name="Sakurai T."/>
            <person name="Iida K."/>
            <person name="Akiyama K."/>
            <person name="Satou M."/>
            <person name="Toyoda T."/>
            <person name="Konagaya A."/>
            <person name="Carninci P."/>
            <person name="Kawai J."/>
            <person name="Hayashizaki Y."/>
            <person name="Shinozaki K."/>
        </authorList>
    </citation>
    <scope>NUCLEOTIDE SEQUENCE [LARGE SCALE MRNA]</scope>
    <source>
        <strain>cv. Columbia</strain>
    </source>
</reference>
<reference key="4">
    <citation type="journal article" date="2004" name="Plant Mol. Biol.">
        <title>Functional genomic analysis of Arabidopsis thaliana glycoside hydrolase family 1.</title>
        <authorList>
            <person name="Xu Z."/>
            <person name="Escamilla-Trevino L.L."/>
            <person name="Zeng L."/>
            <person name="Lalgondar M."/>
            <person name="Bevan D.R."/>
            <person name="Winkel B.S.J."/>
            <person name="Mohamed A."/>
            <person name="Cheng C.-L."/>
            <person name="Shih M.-C."/>
            <person name="Poulton J.E."/>
            <person name="Esen A."/>
        </authorList>
    </citation>
    <scope>GENE FAMILY</scope>
    <scope>NOMENCLATURE</scope>
</reference>
<name>BGL06_ARATH</name>
<dbReference type="EC" id="3.2.1.21" evidence="1"/>
<dbReference type="EMBL" id="AC004473">
    <property type="protein sequence ID" value="AAC24060.1"/>
    <property type="status" value="ALT_SEQ"/>
    <property type="molecule type" value="Genomic_DNA"/>
</dbReference>
<dbReference type="EMBL" id="CP002684">
    <property type="protein sequence ID" value="AEE33672.1"/>
    <property type="molecule type" value="Genomic_DNA"/>
</dbReference>
<dbReference type="EMBL" id="AK175453">
    <property type="protein sequence ID" value="BAD43216.1"/>
    <property type="molecule type" value="mRNA"/>
</dbReference>
<dbReference type="PIR" id="T02279">
    <property type="entry name" value="T02279"/>
</dbReference>
<dbReference type="RefSeq" id="NP_176233.2">
    <property type="nucleotide sequence ID" value="NM_104717.3"/>
</dbReference>
<dbReference type="SMR" id="Q682B4"/>
<dbReference type="FunCoup" id="Q682B4">
    <property type="interactions" value="193"/>
</dbReference>
<dbReference type="STRING" id="3702.Q682B4"/>
<dbReference type="CAZy" id="GH1">
    <property type="family name" value="Glycoside Hydrolase Family 1"/>
</dbReference>
<dbReference type="GlyCosmos" id="Q682B4">
    <property type="glycosylation" value="2 sites, No reported glycans"/>
</dbReference>
<dbReference type="GlyGen" id="Q682B4">
    <property type="glycosylation" value="2 sites"/>
</dbReference>
<dbReference type="PaxDb" id="3702-AT1G60270.1"/>
<dbReference type="EnsemblPlants" id="AT1G60270.1">
    <property type="protein sequence ID" value="AT1G60270.1"/>
    <property type="gene ID" value="AT1G60270"/>
</dbReference>
<dbReference type="GeneID" id="3767579"/>
<dbReference type="Gramene" id="AT1G60270.1">
    <property type="protein sequence ID" value="AT1G60270.1"/>
    <property type="gene ID" value="AT1G60270"/>
</dbReference>
<dbReference type="KEGG" id="ath:AT1G60270"/>
<dbReference type="Araport" id="AT1G60270"/>
<dbReference type="TAIR" id="AT1G60270">
    <property type="gene designation" value="BGLU6"/>
</dbReference>
<dbReference type="eggNOG" id="KOG0626">
    <property type="taxonomic scope" value="Eukaryota"/>
</dbReference>
<dbReference type="HOGENOM" id="CLU_001859_3_0_1"/>
<dbReference type="InParanoid" id="Q682B4"/>
<dbReference type="OMA" id="HTIVEDF"/>
<dbReference type="BioCyc" id="ARA:AT1G60270-MONOMER"/>
<dbReference type="Proteomes" id="UP000006548">
    <property type="component" value="Chromosome 1"/>
</dbReference>
<dbReference type="ExpressionAtlas" id="Q682B4">
    <property type="expression patterns" value="baseline and differential"/>
</dbReference>
<dbReference type="GO" id="GO:0008422">
    <property type="term" value="F:beta-glucosidase activity"/>
    <property type="evidence" value="ECO:0007669"/>
    <property type="project" value="UniProtKB-EC"/>
</dbReference>
<dbReference type="GO" id="GO:0005975">
    <property type="term" value="P:carbohydrate metabolic process"/>
    <property type="evidence" value="ECO:0007669"/>
    <property type="project" value="InterPro"/>
</dbReference>
<dbReference type="Gene3D" id="3.20.20.80">
    <property type="entry name" value="Glycosidases"/>
    <property type="match status" value="1"/>
</dbReference>
<dbReference type="InterPro" id="IPR001360">
    <property type="entry name" value="Glyco_hydro_1"/>
</dbReference>
<dbReference type="InterPro" id="IPR033132">
    <property type="entry name" value="Glyco_hydro_1_N_CS"/>
</dbReference>
<dbReference type="InterPro" id="IPR017853">
    <property type="entry name" value="Glycoside_hydrolase_SF"/>
</dbReference>
<dbReference type="PANTHER" id="PTHR10353:SF150">
    <property type="entry name" value="BETA-GLUCOSIDASE 1-RELATED"/>
    <property type="match status" value="1"/>
</dbReference>
<dbReference type="PANTHER" id="PTHR10353">
    <property type="entry name" value="GLYCOSYL HYDROLASE"/>
    <property type="match status" value="1"/>
</dbReference>
<dbReference type="Pfam" id="PF00232">
    <property type="entry name" value="Glyco_hydro_1"/>
    <property type="match status" value="1"/>
</dbReference>
<dbReference type="SUPFAM" id="SSF51445">
    <property type="entry name" value="(Trans)glycosidases"/>
    <property type="match status" value="1"/>
</dbReference>
<dbReference type="PROSITE" id="PS00653">
    <property type="entry name" value="GLYCOSYL_HYDROL_F1_2"/>
    <property type="match status" value="1"/>
</dbReference>
<sequence>MEKTFALITIFLAFAFSGKCSDVFSRCDFPEGFVFGSSTSAYQWEGAVAEDGRKPSVWDRFCHSHNNQGNGDITCDGYHKYKEDVKLMVDTNLDAFRFSISWSRLIPNRRGPVNQKGLQFYKNLIQELVNHGIEPYVTLHHFDHPQYLEDEYEGWLNHMIVEDFTAYADVCFREFGNHVKFWTTINEGNIFSIGGYNDGDSPPGRCSIPGQNCLLGNSSTEPYIVGHNLLLAHASVSRLYKQNYKDKQGGSIGFSILTIGFSPSTSSKDDAIATQRANDFFNGWMLGPLIYGDYPDTMKRIVGSRMPVFSEEESEQVKGSSDYIGINHYLAASITNSKLKPSISGNPDFYSDMNVILSFFANFSSSEYDVAPWAIEAVL</sequence>
<organism>
    <name type="scientific">Arabidopsis thaliana</name>
    <name type="common">Mouse-ear cress</name>
    <dbReference type="NCBI Taxonomy" id="3702"/>
    <lineage>
        <taxon>Eukaryota</taxon>
        <taxon>Viridiplantae</taxon>
        <taxon>Streptophyta</taxon>
        <taxon>Embryophyta</taxon>
        <taxon>Tracheophyta</taxon>
        <taxon>Spermatophyta</taxon>
        <taxon>Magnoliopsida</taxon>
        <taxon>eudicotyledons</taxon>
        <taxon>Gunneridae</taxon>
        <taxon>Pentapetalae</taxon>
        <taxon>rosids</taxon>
        <taxon>malvids</taxon>
        <taxon>Brassicales</taxon>
        <taxon>Brassicaceae</taxon>
        <taxon>Camelineae</taxon>
        <taxon>Arabidopsis</taxon>
    </lineage>
</organism>
<feature type="signal peptide" evidence="3">
    <location>
        <begin position="1"/>
        <end position="20"/>
    </location>
</feature>
<feature type="chain" id="PRO_0000389568" description="Putative beta-glucosidase 6">
    <location>
        <begin position="21"/>
        <end position="379"/>
    </location>
</feature>
<feature type="active site" description="Proton donor" evidence="2">
    <location>
        <position position="187"/>
    </location>
</feature>
<feature type="binding site" evidence="2">
    <location>
        <position position="43"/>
    </location>
    <ligand>
        <name>a beta-D-glucoside</name>
        <dbReference type="ChEBI" id="CHEBI:22798"/>
    </ligand>
</feature>
<feature type="binding site" evidence="2">
    <location>
        <position position="141"/>
    </location>
    <ligand>
        <name>a beta-D-glucoside</name>
        <dbReference type="ChEBI" id="CHEBI:22798"/>
    </ligand>
</feature>
<feature type="binding site" evidence="2">
    <location>
        <begin position="186"/>
        <end position="187"/>
    </location>
    <ligand>
        <name>a beta-D-glucoside</name>
        <dbReference type="ChEBI" id="CHEBI:22798"/>
    </ligand>
</feature>
<feature type="binding site" evidence="2">
    <location>
        <position position="329"/>
    </location>
    <ligand>
        <name>a beta-D-glucoside</name>
        <dbReference type="ChEBI" id="CHEBI:22798"/>
    </ligand>
</feature>
<feature type="glycosylation site" description="N-linked (GlcNAc...) asparagine" evidence="4">
    <location>
        <position position="217"/>
    </location>
</feature>
<feature type="glycosylation site" description="N-linked (GlcNAc...) asparagine" evidence="4">
    <location>
        <position position="362"/>
    </location>
</feature>
<feature type="disulfide bond" evidence="2">
    <location>
        <begin position="206"/>
        <end position="213"/>
    </location>
</feature>
<gene>
    <name evidence="5" type="primary">BGLU6</name>
    <name evidence="7" type="ordered locus">At1g60270</name>
    <name evidence="8" type="ORF">T13D8.16</name>
</gene>
<keyword id="KW-1015">Disulfide bond</keyword>
<keyword id="KW-0325">Glycoprotein</keyword>
<keyword id="KW-0326">Glycosidase</keyword>
<keyword id="KW-0378">Hydrolase</keyword>
<keyword id="KW-1185">Reference proteome</keyword>
<keyword id="KW-0732">Signal</keyword>
<protein>
    <recommendedName>
        <fullName evidence="5">Putative beta-glucosidase 6</fullName>
        <shortName evidence="5">AtBGLU6</shortName>
        <ecNumber evidence="1">3.2.1.21</ecNumber>
    </recommendedName>
</protein>